<proteinExistence type="inferred from homology"/>
<organism>
    <name type="scientific">Dictyostelium discoideum</name>
    <name type="common">Social amoeba</name>
    <dbReference type="NCBI Taxonomy" id="44689"/>
    <lineage>
        <taxon>Eukaryota</taxon>
        <taxon>Amoebozoa</taxon>
        <taxon>Evosea</taxon>
        <taxon>Eumycetozoa</taxon>
        <taxon>Dictyostelia</taxon>
        <taxon>Dictyosteliales</taxon>
        <taxon>Dictyosteliaceae</taxon>
        <taxon>Dictyostelium</taxon>
    </lineage>
</organism>
<protein>
    <recommendedName>
        <fullName>Ras-related protein Rab-32C</fullName>
    </recommendedName>
</protein>
<comment type="similarity">
    <text evidence="3">Belongs to the small GTPase superfamily. Rab family.</text>
</comment>
<feature type="chain" id="PRO_0000330643" description="Ras-related protein Rab-32C">
    <location>
        <begin position="1"/>
        <end position="224"/>
    </location>
</feature>
<feature type="region of interest" description="Disordered" evidence="2">
    <location>
        <begin position="1"/>
        <end position="22"/>
    </location>
</feature>
<feature type="region of interest" description="Disordered" evidence="2">
    <location>
        <begin position="203"/>
        <end position="224"/>
    </location>
</feature>
<feature type="short sequence motif" description="Effector region" evidence="1">
    <location>
        <begin position="57"/>
        <end position="65"/>
    </location>
</feature>
<feature type="compositionally biased region" description="Low complexity" evidence="2">
    <location>
        <begin position="209"/>
        <end position="224"/>
    </location>
</feature>
<feature type="binding site" evidence="1">
    <location>
        <begin position="35"/>
        <end position="42"/>
    </location>
    <ligand>
        <name>GTP</name>
        <dbReference type="ChEBI" id="CHEBI:37565"/>
    </ligand>
</feature>
<feature type="binding site" evidence="1">
    <location>
        <begin position="83"/>
        <end position="87"/>
    </location>
    <ligand>
        <name>GTP</name>
        <dbReference type="ChEBI" id="CHEBI:37565"/>
    </ligand>
</feature>
<feature type="binding site" evidence="1">
    <location>
        <begin position="142"/>
        <end position="145"/>
    </location>
    <ligand>
        <name>GTP</name>
        <dbReference type="ChEBI" id="CHEBI:37565"/>
    </ligand>
</feature>
<feature type="lipid moiety-binding region" description="S-geranylgeranyl cysteine" evidence="1">
    <location>
        <position position="223"/>
    </location>
</feature>
<feature type="lipid moiety-binding region" description="S-geranylgeranyl cysteine" evidence="1">
    <location>
        <position position="224"/>
    </location>
</feature>
<accession>Q8MXQ2</accession>
<accession>Q553M1</accession>
<reference key="1">
    <citation type="journal article" date="2002" name="Nature">
        <title>Sequence and analysis of chromosome 2 of Dictyostelium discoideum.</title>
        <authorList>
            <person name="Gloeckner G."/>
            <person name="Eichinger L."/>
            <person name="Szafranski K."/>
            <person name="Pachebat J.A."/>
            <person name="Bankier A.T."/>
            <person name="Dear P.H."/>
            <person name="Lehmann R."/>
            <person name="Baumgart C."/>
            <person name="Parra G."/>
            <person name="Abril J.F."/>
            <person name="Guigo R."/>
            <person name="Kumpf K."/>
            <person name="Tunggal B."/>
            <person name="Cox E.C."/>
            <person name="Quail M.A."/>
            <person name="Platzer M."/>
            <person name="Rosenthal A."/>
            <person name="Noegel A.A."/>
        </authorList>
    </citation>
    <scope>NUCLEOTIDE SEQUENCE [LARGE SCALE GENOMIC DNA]</scope>
    <source>
        <strain>AX4</strain>
    </source>
</reference>
<reference key="2">
    <citation type="journal article" date="2005" name="Nature">
        <title>The genome of the social amoeba Dictyostelium discoideum.</title>
        <authorList>
            <person name="Eichinger L."/>
            <person name="Pachebat J.A."/>
            <person name="Gloeckner G."/>
            <person name="Rajandream M.A."/>
            <person name="Sucgang R."/>
            <person name="Berriman M."/>
            <person name="Song J."/>
            <person name="Olsen R."/>
            <person name="Szafranski K."/>
            <person name="Xu Q."/>
            <person name="Tunggal B."/>
            <person name="Kummerfeld S."/>
            <person name="Madera M."/>
            <person name="Konfortov B.A."/>
            <person name="Rivero F."/>
            <person name="Bankier A.T."/>
            <person name="Lehmann R."/>
            <person name="Hamlin N."/>
            <person name="Davies R."/>
            <person name="Gaudet P."/>
            <person name="Fey P."/>
            <person name="Pilcher K."/>
            <person name="Chen G."/>
            <person name="Saunders D."/>
            <person name="Sodergren E.J."/>
            <person name="Davis P."/>
            <person name="Kerhornou A."/>
            <person name="Nie X."/>
            <person name="Hall N."/>
            <person name="Anjard C."/>
            <person name="Hemphill L."/>
            <person name="Bason N."/>
            <person name="Farbrother P."/>
            <person name="Desany B."/>
            <person name="Just E."/>
            <person name="Morio T."/>
            <person name="Rost R."/>
            <person name="Churcher C.M."/>
            <person name="Cooper J."/>
            <person name="Haydock S."/>
            <person name="van Driessche N."/>
            <person name="Cronin A."/>
            <person name="Goodhead I."/>
            <person name="Muzny D.M."/>
            <person name="Mourier T."/>
            <person name="Pain A."/>
            <person name="Lu M."/>
            <person name="Harper D."/>
            <person name="Lindsay R."/>
            <person name="Hauser H."/>
            <person name="James K.D."/>
            <person name="Quiles M."/>
            <person name="Madan Babu M."/>
            <person name="Saito T."/>
            <person name="Buchrieser C."/>
            <person name="Wardroper A."/>
            <person name="Felder M."/>
            <person name="Thangavelu M."/>
            <person name="Johnson D."/>
            <person name="Knights A."/>
            <person name="Loulseged H."/>
            <person name="Mungall K.L."/>
            <person name="Oliver K."/>
            <person name="Price C."/>
            <person name="Quail M.A."/>
            <person name="Urushihara H."/>
            <person name="Hernandez J."/>
            <person name="Rabbinowitsch E."/>
            <person name="Steffen D."/>
            <person name="Sanders M."/>
            <person name="Ma J."/>
            <person name="Kohara Y."/>
            <person name="Sharp S."/>
            <person name="Simmonds M.N."/>
            <person name="Spiegler S."/>
            <person name="Tivey A."/>
            <person name="Sugano S."/>
            <person name="White B."/>
            <person name="Walker D."/>
            <person name="Woodward J.R."/>
            <person name="Winckler T."/>
            <person name="Tanaka Y."/>
            <person name="Shaulsky G."/>
            <person name="Schleicher M."/>
            <person name="Weinstock G.M."/>
            <person name="Rosenthal A."/>
            <person name="Cox E.C."/>
            <person name="Chisholm R.L."/>
            <person name="Gibbs R.A."/>
            <person name="Loomis W.F."/>
            <person name="Platzer M."/>
            <person name="Kay R.R."/>
            <person name="Williams J.G."/>
            <person name="Dear P.H."/>
            <person name="Noegel A.A."/>
            <person name="Barrell B.G."/>
            <person name="Kuspa A."/>
        </authorList>
    </citation>
    <scope>NUCLEOTIDE SEQUENCE [LARGE SCALE GENOMIC DNA]</scope>
    <source>
        <strain>AX4</strain>
    </source>
</reference>
<gene>
    <name type="primary">rab32C</name>
    <name type="ORF">DDB_G0275675</name>
</gene>
<dbReference type="EMBL" id="AAFI02000013">
    <property type="protein sequence ID" value="EAL69588.1"/>
    <property type="molecule type" value="Genomic_DNA"/>
</dbReference>
<dbReference type="RefSeq" id="XP_643480.1">
    <property type="nucleotide sequence ID" value="XM_638388.1"/>
</dbReference>
<dbReference type="SMR" id="Q8MXQ2"/>
<dbReference type="STRING" id="44689.Q8MXQ2"/>
<dbReference type="PaxDb" id="44689-DDB0230000"/>
<dbReference type="EnsemblProtists" id="EAL69588">
    <property type="protein sequence ID" value="EAL69588"/>
    <property type="gene ID" value="DDB_G0275675"/>
</dbReference>
<dbReference type="GeneID" id="8620061"/>
<dbReference type="KEGG" id="ddi:DDB_G0275675"/>
<dbReference type="dictyBase" id="DDB_G0275675">
    <property type="gene designation" value="rab32C"/>
</dbReference>
<dbReference type="VEuPathDB" id="AmoebaDB:DDB_G0275675"/>
<dbReference type="eggNOG" id="KOG4423">
    <property type="taxonomic scope" value="Eukaryota"/>
</dbReference>
<dbReference type="HOGENOM" id="CLU_041217_10_6_1"/>
<dbReference type="InParanoid" id="Q8MXQ2"/>
<dbReference type="OMA" id="SIIQRYC"/>
<dbReference type="PhylomeDB" id="Q8MXQ2"/>
<dbReference type="Reactome" id="R-DDI-8873719">
    <property type="pathway name" value="RAB geranylgeranylation"/>
</dbReference>
<dbReference type="PRO" id="PR:Q8MXQ2"/>
<dbReference type="Proteomes" id="UP000002195">
    <property type="component" value="Chromosome 2"/>
</dbReference>
<dbReference type="GO" id="GO:0012505">
    <property type="term" value="C:endomembrane system"/>
    <property type="evidence" value="ECO:0000318"/>
    <property type="project" value="GO_Central"/>
</dbReference>
<dbReference type="GO" id="GO:0005739">
    <property type="term" value="C:mitochondrion"/>
    <property type="evidence" value="ECO:0000318"/>
    <property type="project" value="GO_Central"/>
</dbReference>
<dbReference type="GO" id="GO:0005802">
    <property type="term" value="C:trans-Golgi network"/>
    <property type="evidence" value="ECO:0000318"/>
    <property type="project" value="GO_Central"/>
</dbReference>
<dbReference type="GO" id="GO:0005525">
    <property type="term" value="F:GTP binding"/>
    <property type="evidence" value="ECO:0007669"/>
    <property type="project" value="UniProtKB-KW"/>
</dbReference>
<dbReference type="GO" id="GO:0003924">
    <property type="term" value="F:GTPase activity"/>
    <property type="evidence" value="ECO:0000318"/>
    <property type="project" value="GO_Central"/>
</dbReference>
<dbReference type="GO" id="GO:0006886">
    <property type="term" value="P:intracellular protein transport"/>
    <property type="evidence" value="ECO:0000318"/>
    <property type="project" value="GO_Central"/>
</dbReference>
<dbReference type="GO" id="GO:0032438">
    <property type="term" value="P:melanosome organization"/>
    <property type="evidence" value="ECO:0000318"/>
    <property type="project" value="GO_Central"/>
</dbReference>
<dbReference type="FunFam" id="3.40.50.300:FF:001800">
    <property type="entry name" value="Rab family GTPase"/>
    <property type="match status" value="1"/>
</dbReference>
<dbReference type="Gene3D" id="3.40.50.300">
    <property type="entry name" value="P-loop containing nucleotide triphosphate hydrolases"/>
    <property type="match status" value="1"/>
</dbReference>
<dbReference type="InterPro" id="IPR027417">
    <property type="entry name" value="P-loop_NTPase"/>
</dbReference>
<dbReference type="InterPro" id="IPR005225">
    <property type="entry name" value="Small_GTP-bd"/>
</dbReference>
<dbReference type="InterPro" id="IPR001806">
    <property type="entry name" value="Small_GTPase"/>
</dbReference>
<dbReference type="NCBIfam" id="TIGR00231">
    <property type="entry name" value="small_GTP"/>
    <property type="match status" value="1"/>
</dbReference>
<dbReference type="PANTHER" id="PTHR47981">
    <property type="entry name" value="RAB FAMILY"/>
    <property type="match status" value="1"/>
</dbReference>
<dbReference type="PANTHER" id="PTHR47981:SF39">
    <property type="entry name" value="RAS-RELATED PROTEIN RAB"/>
    <property type="match status" value="1"/>
</dbReference>
<dbReference type="Pfam" id="PF00071">
    <property type="entry name" value="Ras"/>
    <property type="match status" value="1"/>
</dbReference>
<dbReference type="PRINTS" id="PR00449">
    <property type="entry name" value="RASTRNSFRMNG"/>
</dbReference>
<dbReference type="SMART" id="SM00175">
    <property type="entry name" value="RAB"/>
    <property type="match status" value="1"/>
</dbReference>
<dbReference type="SMART" id="SM00176">
    <property type="entry name" value="RAN"/>
    <property type="match status" value="1"/>
</dbReference>
<dbReference type="SMART" id="SM00173">
    <property type="entry name" value="RAS"/>
    <property type="match status" value="1"/>
</dbReference>
<dbReference type="SMART" id="SM00174">
    <property type="entry name" value="RHO"/>
    <property type="match status" value="1"/>
</dbReference>
<dbReference type="SUPFAM" id="SSF52540">
    <property type="entry name" value="P-loop containing nucleoside triphosphate hydrolases"/>
    <property type="match status" value="1"/>
</dbReference>
<dbReference type="PROSITE" id="PS51419">
    <property type="entry name" value="RAB"/>
    <property type="match status" value="1"/>
</dbReference>
<keyword id="KW-0342">GTP-binding</keyword>
<keyword id="KW-0449">Lipoprotein</keyword>
<keyword id="KW-0547">Nucleotide-binding</keyword>
<keyword id="KW-0636">Prenylation</keyword>
<keyword id="KW-1185">Reference proteome</keyword>
<sequence length="224" mass="25631">MYSNKNDKDKDKDQNNENNKNNDDEAISLKILVVGKLACGKTSIIQRYCHNNFQPKYKPTIGVDFQQKVLEIMGQKVLLQLWDIAGQERFGHMTRVYFQNAHGAVIVFDATRSGTFLGAKAWKDDIDYCFNNENLPTILLANKCDLLTPPYTFPEDINTFCEQNRFNKYFYTSAKEDTGINEALEELVKIILESYQTQEQSTGFKLSDQSQSTETTPTQSKTCC</sequence>
<evidence type="ECO:0000250" key="1"/>
<evidence type="ECO:0000256" key="2">
    <source>
        <dbReference type="SAM" id="MobiDB-lite"/>
    </source>
</evidence>
<evidence type="ECO:0000305" key="3"/>
<name>RB32C_DICDI</name>